<feature type="signal peptide" evidence="2">
    <location>
        <begin position="1"/>
        <end position="25"/>
    </location>
</feature>
<feature type="chain" id="PRO_5006751792" description="Aldehyde oxidase GLOX1">
    <location>
        <begin position="26"/>
        <end position="615"/>
    </location>
</feature>
<feature type="region of interest" description="Disordered" evidence="4">
    <location>
        <begin position="70"/>
        <end position="89"/>
    </location>
</feature>
<feature type="compositionally biased region" description="Basic residues" evidence="4">
    <location>
        <begin position="72"/>
        <end position="82"/>
    </location>
</feature>
<feature type="glycosylation site" description="N-linked (GlcNAc...) asparagine" evidence="3">
    <location>
        <position position="35"/>
    </location>
</feature>
<feature type="glycosylation site" description="N-linked (GlcNAc...) asparagine" evidence="3">
    <location>
        <position position="187"/>
    </location>
</feature>
<feature type="glycosylation site" description="N-linked (GlcNAc...) asparagine" evidence="3">
    <location>
        <position position="297"/>
    </location>
</feature>
<comment type="function">
    <text evidence="1 5">Catalyzes the oxidation of aldehydes to the corresponding carboxylate by coupling the reaction to the reduction of dioxygen to hydrogen peroxide. Substrates include glyoxal and other aldehydes (By similarity). May be regulated by the transcription factor MYB80 during anther development and play a role in tapetum and pollen development (PubMed:21673079).</text>
</comment>
<comment type="catalytic activity">
    <reaction evidence="7">
        <text>an aldehyde + O2 + H2O = a carboxylate + H2O2 + H(+)</text>
        <dbReference type="Rhea" id="RHEA:16829"/>
        <dbReference type="ChEBI" id="CHEBI:15377"/>
        <dbReference type="ChEBI" id="CHEBI:15378"/>
        <dbReference type="ChEBI" id="CHEBI:15379"/>
        <dbReference type="ChEBI" id="CHEBI:16240"/>
        <dbReference type="ChEBI" id="CHEBI:17478"/>
        <dbReference type="ChEBI" id="CHEBI:29067"/>
        <dbReference type="EC" id="1.2.3.1"/>
    </reaction>
</comment>
<comment type="subcellular location">
    <subcellularLocation>
        <location evidence="1">Secreted</location>
    </subcellularLocation>
</comment>
<comment type="developmental stage">
    <text evidence="5">During anther development, expressed from stage 10 to the latest stage 14 in tapetal cells, developing microspores and mature pollen grains and released pollen grains.</text>
</comment>
<evidence type="ECO:0000250" key="1">
    <source>
        <dbReference type="UniProtKB" id="Q01772"/>
    </source>
</evidence>
<evidence type="ECO:0000255" key="2"/>
<evidence type="ECO:0000255" key="3">
    <source>
        <dbReference type="PROSITE-ProRule" id="PRU00498"/>
    </source>
</evidence>
<evidence type="ECO:0000256" key="4">
    <source>
        <dbReference type="SAM" id="MobiDB-lite"/>
    </source>
</evidence>
<evidence type="ECO:0000269" key="5">
    <source>
    </source>
</evidence>
<evidence type="ECO:0000303" key="6">
    <source>
    </source>
</evidence>
<evidence type="ECO:0000305" key="7"/>
<evidence type="ECO:0000305" key="8">
    <source>
    </source>
</evidence>
<evidence type="ECO:0000312" key="9">
    <source>
        <dbReference type="Araport" id="AT1G67290"/>
    </source>
</evidence>
<evidence type="ECO:0000312" key="10">
    <source>
        <dbReference type="EMBL" id="AAG00252.1"/>
    </source>
</evidence>
<gene>
    <name evidence="6" type="primary">GLOX1</name>
    <name evidence="9" type="ordered locus">At1g67290</name>
    <name evidence="10" type="ORF">F1N21.11</name>
</gene>
<sequence length="615" mass="67775">MKKSTRLLWLLSIIVLVAAVSKAVAEVDNDDDDDNTSLEGMTTAKRETLEVEDHTSLEGMVKREALEVKPPKAGKGKGKGKGRGTVAAGPEMNWPGQWELFMKNSGVSAMHAILMPLINKVQFYDATIWRISQIKLPPGVPCHVFDAKKNKVDCWAHSVLVDINTGDIKPLALTTDTWCSSGGLTVNGTLVSTGGFQGGANTARYLSTCENCVWIEYPKALAARRWYSTQATLPDGTFIVVGGRDALNYEYILPEGQNNKKLYDSQLLRQTDDPEENNLYPFVWLNTDGNLFIFANNRSILLSPKTNKVLKEFPQLPGGARNYPGSASSALLPIRLYVQNPAIIPADVLVCGGAKQDAYFRAERLKIYDWALKDCARLNINSAKPVWKTETMPTSRVMSDTVILPNGEILIINGAKRGSSGWHLAKEPNFAPLLYKPNKPLGQRFKELAPSTIPRVYHSIAIALPDGKVLVGGSNTNNGYQFNVEYPTELRIEKFSPPYLDPALANMRPRIVNTATPKQIKYGQMFDVKIELKQQNVAKENVMVTMLAPSFTTHSVSMNMRLLMLGINNVKNVGGDNHQIQAVAPPSGKLAPPGYYLLFAVYNGVPSVGEWIQIV</sequence>
<proteinExistence type="evidence at transcript level"/>
<organism>
    <name type="scientific">Arabidopsis thaliana</name>
    <name type="common">Mouse-ear cress</name>
    <dbReference type="NCBI Taxonomy" id="3702"/>
    <lineage>
        <taxon>Eukaryota</taxon>
        <taxon>Viridiplantae</taxon>
        <taxon>Streptophyta</taxon>
        <taxon>Embryophyta</taxon>
        <taxon>Tracheophyta</taxon>
        <taxon>Spermatophyta</taxon>
        <taxon>Magnoliopsida</taxon>
        <taxon>eudicotyledons</taxon>
        <taxon>Gunneridae</taxon>
        <taxon>Pentapetalae</taxon>
        <taxon>rosids</taxon>
        <taxon>malvids</taxon>
        <taxon>Brassicales</taxon>
        <taxon>Brassicaceae</taxon>
        <taxon>Camelineae</taxon>
        <taxon>Arabidopsis</taxon>
    </lineage>
</organism>
<name>GLOX1_ARATH</name>
<keyword id="KW-0217">Developmental protein</keyword>
<keyword id="KW-0325">Glycoprotein</keyword>
<keyword id="KW-0560">Oxidoreductase</keyword>
<keyword id="KW-1185">Reference proteome</keyword>
<keyword id="KW-0964">Secreted</keyword>
<keyword id="KW-0732">Signal</keyword>
<protein>
    <recommendedName>
        <fullName evidence="7">Aldehyde oxidase GLOX1</fullName>
        <ecNumber evidence="7">1.2.3.1</ecNumber>
    </recommendedName>
    <alternativeName>
        <fullName evidence="8">Glyoxal oxidase 1</fullName>
    </alternativeName>
</protein>
<accession>Q9FYG4</accession>
<dbReference type="EC" id="1.2.3.1" evidence="7"/>
<dbReference type="EMBL" id="AC002130">
    <property type="protein sequence ID" value="AAG00252.1"/>
    <property type="molecule type" value="Genomic_DNA"/>
</dbReference>
<dbReference type="EMBL" id="CP002684">
    <property type="protein sequence ID" value="AEE34623.1"/>
    <property type="molecule type" value="Genomic_DNA"/>
</dbReference>
<dbReference type="EMBL" id="BT002818">
    <property type="protein sequence ID" value="AAO22637.1"/>
    <property type="molecule type" value="mRNA"/>
</dbReference>
<dbReference type="EMBL" id="BT004443">
    <property type="protein sequence ID" value="AAO42437.1"/>
    <property type="molecule type" value="mRNA"/>
</dbReference>
<dbReference type="RefSeq" id="NP_176897.1">
    <property type="nucleotide sequence ID" value="NM_105397.3"/>
</dbReference>
<dbReference type="SMR" id="Q9FYG4"/>
<dbReference type="FunCoup" id="Q9FYG4">
    <property type="interactions" value="2"/>
</dbReference>
<dbReference type="STRING" id="3702.Q9FYG4"/>
<dbReference type="GlyCosmos" id="Q9FYG4">
    <property type="glycosylation" value="3 sites, No reported glycans"/>
</dbReference>
<dbReference type="GlyGen" id="Q9FYG4">
    <property type="glycosylation" value="3 sites"/>
</dbReference>
<dbReference type="iPTMnet" id="Q9FYG4"/>
<dbReference type="PaxDb" id="3702-AT1G67290.1"/>
<dbReference type="ProteomicsDB" id="248586"/>
<dbReference type="EnsemblPlants" id="AT1G67290.1">
    <property type="protein sequence ID" value="AT1G67290.1"/>
    <property type="gene ID" value="AT1G67290"/>
</dbReference>
<dbReference type="GeneID" id="843049"/>
<dbReference type="Gramene" id="AT1G67290.1">
    <property type="protein sequence ID" value="AT1G67290.1"/>
    <property type="gene ID" value="AT1G67290"/>
</dbReference>
<dbReference type="KEGG" id="ath:AT1G67290"/>
<dbReference type="Araport" id="AT1G67290"/>
<dbReference type="TAIR" id="AT1G67290">
    <property type="gene designation" value="GLOX1"/>
</dbReference>
<dbReference type="eggNOG" id="ENOG502QPS4">
    <property type="taxonomic scope" value="Eukaryota"/>
</dbReference>
<dbReference type="HOGENOM" id="CLU_009630_0_0_1"/>
<dbReference type="InParanoid" id="Q9FYG4"/>
<dbReference type="OMA" id="NKPNPGQ"/>
<dbReference type="PhylomeDB" id="Q9FYG4"/>
<dbReference type="PRO" id="PR:Q9FYG4"/>
<dbReference type="Proteomes" id="UP000006548">
    <property type="component" value="Chromosome 1"/>
</dbReference>
<dbReference type="ExpressionAtlas" id="Q9FYG4">
    <property type="expression patterns" value="baseline and differential"/>
</dbReference>
<dbReference type="GO" id="GO:0005576">
    <property type="term" value="C:extracellular region"/>
    <property type="evidence" value="ECO:0007669"/>
    <property type="project" value="UniProtKB-SubCell"/>
</dbReference>
<dbReference type="GO" id="GO:0004031">
    <property type="term" value="F:aldehyde oxidase activity"/>
    <property type="evidence" value="ECO:0007669"/>
    <property type="project" value="UniProtKB-EC"/>
</dbReference>
<dbReference type="CDD" id="cd02851">
    <property type="entry name" value="E_set_GO_C"/>
    <property type="match status" value="1"/>
</dbReference>
<dbReference type="Gene3D" id="2.130.10.80">
    <property type="entry name" value="Galactose oxidase/kelch, beta-propeller"/>
    <property type="match status" value="1"/>
</dbReference>
<dbReference type="Gene3D" id="2.60.40.10">
    <property type="entry name" value="Immunoglobulins"/>
    <property type="match status" value="1"/>
</dbReference>
<dbReference type="InterPro" id="IPR011043">
    <property type="entry name" value="Gal_Oxase/kelch_b-propeller"/>
</dbReference>
<dbReference type="InterPro" id="IPR037293">
    <property type="entry name" value="Gal_Oxidase_central_sf"/>
</dbReference>
<dbReference type="InterPro" id="IPR009880">
    <property type="entry name" value="Glyoxal_oxidase_N"/>
</dbReference>
<dbReference type="InterPro" id="IPR015202">
    <property type="entry name" value="GO-like_E_set"/>
</dbReference>
<dbReference type="InterPro" id="IPR013783">
    <property type="entry name" value="Ig-like_fold"/>
</dbReference>
<dbReference type="InterPro" id="IPR014756">
    <property type="entry name" value="Ig_E-set"/>
</dbReference>
<dbReference type="PANTHER" id="PTHR32208:SF93">
    <property type="entry name" value="ALDEHYDE OXIDASE GLOX1"/>
    <property type="match status" value="1"/>
</dbReference>
<dbReference type="PANTHER" id="PTHR32208">
    <property type="entry name" value="SECRETED PROTEIN-RELATED"/>
    <property type="match status" value="1"/>
</dbReference>
<dbReference type="Pfam" id="PF07250">
    <property type="entry name" value="Glyoxal_oxid_N"/>
    <property type="match status" value="1"/>
</dbReference>
<dbReference type="Pfam" id="PF09118">
    <property type="entry name" value="GO-like_E_set"/>
    <property type="match status" value="1"/>
</dbReference>
<dbReference type="SUPFAM" id="SSF81296">
    <property type="entry name" value="E set domains"/>
    <property type="match status" value="1"/>
</dbReference>
<dbReference type="SUPFAM" id="SSF50965">
    <property type="entry name" value="Galactose oxidase, central domain"/>
    <property type="match status" value="1"/>
</dbReference>
<reference key="1">
    <citation type="journal article" date="2000" name="Nature">
        <title>Sequence and analysis of chromosome 1 of the plant Arabidopsis thaliana.</title>
        <authorList>
            <person name="Theologis A."/>
            <person name="Ecker J.R."/>
            <person name="Palm C.J."/>
            <person name="Federspiel N.A."/>
            <person name="Kaul S."/>
            <person name="White O."/>
            <person name="Alonso J."/>
            <person name="Altafi H."/>
            <person name="Araujo R."/>
            <person name="Bowman C.L."/>
            <person name="Brooks S.Y."/>
            <person name="Buehler E."/>
            <person name="Chan A."/>
            <person name="Chao Q."/>
            <person name="Chen H."/>
            <person name="Cheuk R.F."/>
            <person name="Chin C.W."/>
            <person name="Chung M.K."/>
            <person name="Conn L."/>
            <person name="Conway A.B."/>
            <person name="Conway A.R."/>
            <person name="Creasy T.H."/>
            <person name="Dewar K."/>
            <person name="Dunn P."/>
            <person name="Etgu P."/>
            <person name="Feldblyum T.V."/>
            <person name="Feng J.-D."/>
            <person name="Fong B."/>
            <person name="Fujii C.Y."/>
            <person name="Gill J.E."/>
            <person name="Goldsmith A.D."/>
            <person name="Haas B."/>
            <person name="Hansen N.F."/>
            <person name="Hughes B."/>
            <person name="Huizar L."/>
            <person name="Hunter J.L."/>
            <person name="Jenkins J."/>
            <person name="Johnson-Hopson C."/>
            <person name="Khan S."/>
            <person name="Khaykin E."/>
            <person name="Kim C.J."/>
            <person name="Koo H.L."/>
            <person name="Kremenetskaia I."/>
            <person name="Kurtz D.B."/>
            <person name="Kwan A."/>
            <person name="Lam B."/>
            <person name="Langin-Hooper S."/>
            <person name="Lee A."/>
            <person name="Lee J.M."/>
            <person name="Lenz C.A."/>
            <person name="Li J.H."/>
            <person name="Li Y.-P."/>
            <person name="Lin X."/>
            <person name="Liu S.X."/>
            <person name="Liu Z.A."/>
            <person name="Luros J.S."/>
            <person name="Maiti R."/>
            <person name="Marziali A."/>
            <person name="Militscher J."/>
            <person name="Miranda M."/>
            <person name="Nguyen M."/>
            <person name="Nierman W.C."/>
            <person name="Osborne B.I."/>
            <person name="Pai G."/>
            <person name="Peterson J."/>
            <person name="Pham P.K."/>
            <person name="Rizzo M."/>
            <person name="Rooney T."/>
            <person name="Rowley D."/>
            <person name="Sakano H."/>
            <person name="Salzberg S.L."/>
            <person name="Schwartz J.R."/>
            <person name="Shinn P."/>
            <person name="Southwick A.M."/>
            <person name="Sun H."/>
            <person name="Tallon L.J."/>
            <person name="Tambunga G."/>
            <person name="Toriumi M.J."/>
            <person name="Town C.D."/>
            <person name="Utterback T."/>
            <person name="Van Aken S."/>
            <person name="Vaysberg M."/>
            <person name="Vysotskaia V.S."/>
            <person name="Walker M."/>
            <person name="Wu D."/>
            <person name="Yu G."/>
            <person name="Fraser C.M."/>
            <person name="Venter J.C."/>
            <person name="Davis R.W."/>
        </authorList>
    </citation>
    <scope>NUCLEOTIDE SEQUENCE [LARGE SCALE GENOMIC DNA]</scope>
    <source>
        <strain>cv. Columbia</strain>
    </source>
</reference>
<reference key="2">
    <citation type="journal article" date="2017" name="Plant J.">
        <title>Araport11: a complete reannotation of the Arabidopsis thaliana reference genome.</title>
        <authorList>
            <person name="Cheng C.Y."/>
            <person name="Krishnakumar V."/>
            <person name="Chan A.P."/>
            <person name="Thibaud-Nissen F."/>
            <person name="Schobel S."/>
            <person name="Town C.D."/>
        </authorList>
    </citation>
    <scope>GENOME REANNOTATION</scope>
    <source>
        <strain>cv. Columbia</strain>
    </source>
</reference>
<reference key="3">
    <citation type="journal article" date="2003" name="Science">
        <title>Empirical analysis of transcriptional activity in the Arabidopsis genome.</title>
        <authorList>
            <person name="Yamada K."/>
            <person name="Lim J."/>
            <person name="Dale J.M."/>
            <person name="Chen H."/>
            <person name="Shinn P."/>
            <person name="Palm C.J."/>
            <person name="Southwick A.M."/>
            <person name="Wu H.C."/>
            <person name="Kim C.J."/>
            <person name="Nguyen M."/>
            <person name="Pham P.K."/>
            <person name="Cheuk R.F."/>
            <person name="Karlin-Newmann G."/>
            <person name="Liu S.X."/>
            <person name="Lam B."/>
            <person name="Sakano H."/>
            <person name="Wu T."/>
            <person name="Yu G."/>
            <person name="Miranda M."/>
            <person name="Quach H.L."/>
            <person name="Tripp M."/>
            <person name="Chang C.H."/>
            <person name="Lee J.M."/>
            <person name="Toriumi M.J."/>
            <person name="Chan M.M."/>
            <person name="Tang C.C."/>
            <person name="Onodera C.S."/>
            <person name="Deng J.M."/>
            <person name="Akiyama K."/>
            <person name="Ansari Y."/>
            <person name="Arakawa T."/>
            <person name="Banh J."/>
            <person name="Banno F."/>
            <person name="Bowser L."/>
            <person name="Brooks S.Y."/>
            <person name="Carninci P."/>
            <person name="Chao Q."/>
            <person name="Choy N."/>
            <person name="Enju A."/>
            <person name="Goldsmith A.D."/>
            <person name="Gurjal M."/>
            <person name="Hansen N.F."/>
            <person name="Hayashizaki Y."/>
            <person name="Johnson-Hopson C."/>
            <person name="Hsuan V.W."/>
            <person name="Iida K."/>
            <person name="Karnes M."/>
            <person name="Khan S."/>
            <person name="Koesema E."/>
            <person name="Ishida J."/>
            <person name="Jiang P.X."/>
            <person name="Jones T."/>
            <person name="Kawai J."/>
            <person name="Kamiya A."/>
            <person name="Meyers C."/>
            <person name="Nakajima M."/>
            <person name="Narusaka M."/>
            <person name="Seki M."/>
            <person name="Sakurai T."/>
            <person name="Satou M."/>
            <person name="Tamse R."/>
            <person name="Vaysberg M."/>
            <person name="Wallender E.K."/>
            <person name="Wong C."/>
            <person name="Yamamura Y."/>
            <person name="Yuan S."/>
            <person name="Shinozaki K."/>
            <person name="Davis R.W."/>
            <person name="Theologis A."/>
            <person name="Ecker J.R."/>
        </authorList>
    </citation>
    <scope>NUCLEOTIDE SEQUENCE [LARGE SCALE MRNA]</scope>
    <source>
        <strain>cv. Columbia</strain>
    </source>
</reference>
<reference key="4">
    <citation type="journal article" date="2011" name="Plant Cell">
        <title>The MYB80 transcription factor is required for pollen development and the regulation of tapetal programmed cell death in Arabidopsis thaliana.</title>
        <authorList>
            <person name="Phan H.A."/>
            <person name="Iacuone S."/>
            <person name="Li S.F."/>
            <person name="Parish R.W."/>
        </authorList>
    </citation>
    <scope>FUNCTION</scope>
    <scope>DEVELOPMENTAL STAGE</scope>
</reference>